<dbReference type="EMBL" id="CP000698">
    <property type="protein sequence ID" value="ABQ28472.1"/>
    <property type="molecule type" value="Genomic_DNA"/>
</dbReference>
<dbReference type="RefSeq" id="WP_011941102.1">
    <property type="nucleotide sequence ID" value="NC_009483.1"/>
</dbReference>
<dbReference type="SMR" id="A5G9K4"/>
<dbReference type="STRING" id="351605.Gura_4329"/>
<dbReference type="KEGG" id="gur:Gura_4329"/>
<dbReference type="HOGENOM" id="CLU_060739_1_0_7"/>
<dbReference type="OrthoDB" id="9802672at2"/>
<dbReference type="Proteomes" id="UP000006695">
    <property type="component" value="Chromosome"/>
</dbReference>
<dbReference type="GO" id="GO:0003677">
    <property type="term" value="F:DNA binding"/>
    <property type="evidence" value="ECO:0007669"/>
    <property type="project" value="UniProtKB-UniRule"/>
</dbReference>
<dbReference type="GO" id="GO:0008270">
    <property type="term" value="F:zinc ion binding"/>
    <property type="evidence" value="ECO:0007669"/>
    <property type="project" value="UniProtKB-KW"/>
</dbReference>
<dbReference type="GO" id="GO:0006310">
    <property type="term" value="P:DNA recombination"/>
    <property type="evidence" value="ECO:0007669"/>
    <property type="project" value="UniProtKB-UniRule"/>
</dbReference>
<dbReference type="GO" id="GO:0006281">
    <property type="term" value="P:DNA repair"/>
    <property type="evidence" value="ECO:0007669"/>
    <property type="project" value="UniProtKB-UniRule"/>
</dbReference>
<dbReference type="CDD" id="cd01025">
    <property type="entry name" value="TOPRIM_recR"/>
    <property type="match status" value="1"/>
</dbReference>
<dbReference type="Gene3D" id="3.40.1360.10">
    <property type="match status" value="1"/>
</dbReference>
<dbReference type="Gene3D" id="6.10.250.240">
    <property type="match status" value="1"/>
</dbReference>
<dbReference type="Gene3D" id="1.10.8.420">
    <property type="entry name" value="RecR Domain 1"/>
    <property type="match status" value="1"/>
</dbReference>
<dbReference type="HAMAP" id="MF_00017">
    <property type="entry name" value="RecR"/>
    <property type="match status" value="1"/>
</dbReference>
<dbReference type="InterPro" id="IPR000093">
    <property type="entry name" value="DNA_Rcmb_RecR"/>
</dbReference>
<dbReference type="InterPro" id="IPR023627">
    <property type="entry name" value="Rcmb_RecR"/>
</dbReference>
<dbReference type="InterPro" id="IPR015967">
    <property type="entry name" value="Rcmb_RecR_Znf"/>
</dbReference>
<dbReference type="InterPro" id="IPR006171">
    <property type="entry name" value="TOPRIM_dom"/>
</dbReference>
<dbReference type="InterPro" id="IPR034137">
    <property type="entry name" value="TOPRIM_RecR"/>
</dbReference>
<dbReference type="NCBIfam" id="TIGR00615">
    <property type="entry name" value="recR"/>
    <property type="match status" value="1"/>
</dbReference>
<dbReference type="PANTHER" id="PTHR30446">
    <property type="entry name" value="RECOMBINATION PROTEIN RECR"/>
    <property type="match status" value="1"/>
</dbReference>
<dbReference type="PANTHER" id="PTHR30446:SF0">
    <property type="entry name" value="RECOMBINATION PROTEIN RECR"/>
    <property type="match status" value="1"/>
</dbReference>
<dbReference type="Pfam" id="PF21175">
    <property type="entry name" value="RecR_C"/>
    <property type="match status" value="1"/>
</dbReference>
<dbReference type="Pfam" id="PF21176">
    <property type="entry name" value="RecR_HhH"/>
    <property type="match status" value="1"/>
</dbReference>
<dbReference type="Pfam" id="PF02132">
    <property type="entry name" value="RecR_ZnF"/>
    <property type="match status" value="1"/>
</dbReference>
<dbReference type="Pfam" id="PF13662">
    <property type="entry name" value="Toprim_4"/>
    <property type="match status" value="1"/>
</dbReference>
<dbReference type="SMART" id="SM00493">
    <property type="entry name" value="TOPRIM"/>
    <property type="match status" value="1"/>
</dbReference>
<dbReference type="SUPFAM" id="SSF111304">
    <property type="entry name" value="Recombination protein RecR"/>
    <property type="match status" value="1"/>
</dbReference>
<dbReference type="PROSITE" id="PS01300">
    <property type="entry name" value="RECR"/>
    <property type="match status" value="1"/>
</dbReference>
<dbReference type="PROSITE" id="PS50880">
    <property type="entry name" value="TOPRIM"/>
    <property type="match status" value="1"/>
</dbReference>
<feature type="chain" id="PRO_1000074122" description="Recombination protein RecR">
    <location>
        <begin position="1"/>
        <end position="197"/>
    </location>
</feature>
<feature type="domain" description="Toprim" evidence="1">
    <location>
        <begin position="79"/>
        <end position="174"/>
    </location>
</feature>
<feature type="zinc finger region" description="C4-type" evidence="1">
    <location>
        <begin position="57"/>
        <end position="72"/>
    </location>
</feature>
<name>RECR_GEOUR</name>
<keyword id="KW-0227">DNA damage</keyword>
<keyword id="KW-0233">DNA recombination</keyword>
<keyword id="KW-0234">DNA repair</keyword>
<keyword id="KW-0479">Metal-binding</keyword>
<keyword id="KW-1185">Reference proteome</keyword>
<keyword id="KW-0862">Zinc</keyword>
<keyword id="KW-0863">Zinc-finger</keyword>
<organism>
    <name type="scientific">Geotalea uraniireducens (strain Rf4)</name>
    <name type="common">Geobacter uraniireducens</name>
    <dbReference type="NCBI Taxonomy" id="351605"/>
    <lineage>
        <taxon>Bacteria</taxon>
        <taxon>Pseudomonadati</taxon>
        <taxon>Thermodesulfobacteriota</taxon>
        <taxon>Desulfuromonadia</taxon>
        <taxon>Geobacterales</taxon>
        <taxon>Geobacteraceae</taxon>
        <taxon>Geotalea</taxon>
    </lineage>
</organism>
<sequence>MLHISRSLTKLLGELKKLPSVGDKTALRLAFHLLKSPENLSALAKSLLEVRDGVRFCSTCFGITESDPCHLCTTPRDDASICVVEEPQDILAMERSQAFKGRYHVLHGALSPLNGVTPGQLRIAELLQRLENGSVKEVLLATNFTVEGEATALYLTRLIKPLSIKVTRLAHGIPIGSDLEYVDAATVQRAVEGRSEL</sequence>
<reference key="1">
    <citation type="submission" date="2007-05" db="EMBL/GenBank/DDBJ databases">
        <title>Complete sequence of Geobacter uraniireducens Rf4.</title>
        <authorList>
            <consortium name="US DOE Joint Genome Institute"/>
            <person name="Copeland A."/>
            <person name="Lucas S."/>
            <person name="Lapidus A."/>
            <person name="Barry K."/>
            <person name="Detter J.C."/>
            <person name="Glavina del Rio T."/>
            <person name="Hammon N."/>
            <person name="Israni S."/>
            <person name="Dalin E."/>
            <person name="Tice H."/>
            <person name="Pitluck S."/>
            <person name="Chertkov O."/>
            <person name="Brettin T."/>
            <person name="Bruce D."/>
            <person name="Han C."/>
            <person name="Schmutz J."/>
            <person name="Larimer F."/>
            <person name="Land M."/>
            <person name="Hauser L."/>
            <person name="Kyrpides N."/>
            <person name="Mikhailova N."/>
            <person name="Shelobolina E."/>
            <person name="Aklujkar M."/>
            <person name="Lovley D."/>
            <person name="Richardson P."/>
        </authorList>
    </citation>
    <scope>NUCLEOTIDE SEQUENCE [LARGE SCALE GENOMIC DNA]</scope>
    <source>
        <strain>ATCC BAA-1134 / JCM 13001 / Rf4</strain>
    </source>
</reference>
<proteinExistence type="inferred from homology"/>
<comment type="function">
    <text evidence="1">May play a role in DNA repair. It seems to be involved in an RecBC-independent recombinational process of DNA repair. It may act with RecF and RecO.</text>
</comment>
<comment type="similarity">
    <text evidence="1">Belongs to the RecR family.</text>
</comment>
<gene>
    <name evidence="1" type="primary">recR</name>
    <name type="ordered locus">Gura_4329</name>
</gene>
<accession>A5G9K4</accession>
<protein>
    <recommendedName>
        <fullName evidence="1">Recombination protein RecR</fullName>
    </recommendedName>
</protein>
<evidence type="ECO:0000255" key="1">
    <source>
        <dbReference type="HAMAP-Rule" id="MF_00017"/>
    </source>
</evidence>